<protein>
    <recommendedName>
        <fullName evidence="5">Probable cadmium-transporting ATPase</fullName>
        <ecNumber evidence="1">7.2.2.21</ecNumber>
    </recommendedName>
    <alternativeName>
        <fullName evidence="1">Cadmium-efflux ATPase</fullName>
    </alternativeName>
</protein>
<feature type="chain" id="PRO_0000046247" description="Probable cadmium-transporting ATPase">
    <location>
        <begin position="1"/>
        <end position="711"/>
    </location>
</feature>
<feature type="transmembrane region" description="Helical" evidence="2">
    <location>
        <begin position="89"/>
        <end position="109"/>
    </location>
</feature>
<feature type="transmembrane region" description="Helical" evidence="2">
    <location>
        <begin position="111"/>
        <end position="131"/>
    </location>
</feature>
<feature type="transmembrane region" description="Helical" evidence="2">
    <location>
        <begin position="151"/>
        <end position="171"/>
    </location>
</feature>
<feature type="transmembrane region" description="Helical" evidence="2">
    <location>
        <begin position="317"/>
        <end position="337"/>
    </location>
</feature>
<feature type="transmembrane region" description="Helical" evidence="2">
    <location>
        <begin position="347"/>
        <end position="367"/>
    </location>
</feature>
<feature type="transmembrane region" description="Helical" evidence="2">
    <location>
        <begin position="669"/>
        <end position="689"/>
    </location>
</feature>
<feature type="domain" description="HMA" evidence="3">
    <location>
        <begin position="3"/>
        <end position="66"/>
    </location>
</feature>
<feature type="active site" description="4-aspartylphosphate intermediate" evidence="5">
    <location>
        <position position="398"/>
    </location>
</feature>
<feature type="binding site" evidence="3">
    <location>
        <position position="14"/>
    </location>
    <ligand>
        <name>Cd(2+)</name>
        <dbReference type="ChEBI" id="CHEBI:48775"/>
    </ligand>
</feature>
<feature type="binding site" evidence="3">
    <location>
        <position position="17"/>
    </location>
    <ligand>
        <name>Cd(2+)</name>
        <dbReference type="ChEBI" id="CHEBI:48775"/>
    </ligand>
</feature>
<feature type="strand" evidence="6">
    <location>
        <begin position="4"/>
        <end position="11"/>
    </location>
</feature>
<feature type="helix" evidence="6">
    <location>
        <begin position="15"/>
        <end position="27"/>
    </location>
</feature>
<feature type="strand" evidence="6">
    <location>
        <begin position="31"/>
        <end position="36"/>
    </location>
</feature>
<feature type="strand" evidence="6">
    <location>
        <begin position="39"/>
        <end position="48"/>
    </location>
</feature>
<feature type="helix" evidence="6">
    <location>
        <begin position="51"/>
        <end position="58"/>
    </location>
</feature>
<feature type="turn" evidence="6">
    <location>
        <begin position="59"/>
        <end position="61"/>
    </location>
</feature>
<feature type="strand" evidence="6">
    <location>
        <begin position="64"/>
        <end position="66"/>
    </location>
</feature>
<dbReference type="EC" id="7.2.2.21" evidence="1"/>
<dbReference type="EMBL" id="L28104">
    <property type="protein sequence ID" value="AAA25275.1"/>
    <property type="molecule type" value="Genomic_DNA"/>
</dbReference>
<dbReference type="RefSeq" id="WP_003728466.1">
    <property type="nucleotide sequence ID" value="NZ_WUEB01000010.1"/>
</dbReference>
<dbReference type="RefSeq" id="YP_003728018.1">
    <property type="nucleotide sequence ID" value="NC_014255.1"/>
</dbReference>
<dbReference type="PDB" id="2AJ0">
    <property type="method" value="NMR"/>
    <property type="chains" value="A=1-71"/>
</dbReference>
<dbReference type="PDB" id="2AJ1">
    <property type="method" value="NMR"/>
    <property type="chains" value="A=1-71"/>
</dbReference>
<dbReference type="PDBsum" id="2AJ0"/>
<dbReference type="PDBsum" id="2AJ1"/>
<dbReference type="BMRB" id="Q60048"/>
<dbReference type="SMR" id="Q60048"/>
<dbReference type="TCDB" id="3.A.3.6.8">
    <property type="family name" value="the p-type atpase (p-atpase) superfamily"/>
</dbReference>
<dbReference type="BRENDA" id="7.2.2.21">
    <property type="organism ID" value="3045"/>
</dbReference>
<dbReference type="EvolutionaryTrace" id="Q60048"/>
<dbReference type="PHI-base" id="PHI:7386"/>
<dbReference type="GO" id="GO:0005886">
    <property type="term" value="C:plasma membrane"/>
    <property type="evidence" value="ECO:0007669"/>
    <property type="project" value="UniProtKB-SubCell"/>
</dbReference>
<dbReference type="GO" id="GO:0005524">
    <property type="term" value="F:ATP binding"/>
    <property type="evidence" value="ECO:0007669"/>
    <property type="project" value="UniProtKB-KW"/>
</dbReference>
<dbReference type="GO" id="GO:0016887">
    <property type="term" value="F:ATP hydrolysis activity"/>
    <property type="evidence" value="ECO:0007669"/>
    <property type="project" value="InterPro"/>
</dbReference>
<dbReference type="GO" id="GO:0046872">
    <property type="term" value="F:metal ion binding"/>
    <property type="evidence" value="ECO:0007669"/>
    <property type="project" value="UniProtKB-KW"/>
</dbReference>
<dbReference type="GO" id="GO:0008551">
    <property type="term" value="F:P-type cadmium transporter activity"/>
    <property type="evidence" value="ECO:0007669"/>
    <property type="project" value="UniProtKB-EC"/>
</dbReference>
<dbReference type="GO" id="GO:0046686">
    <property type="term" value="P:response to cadmium ion"/>
    <property type="evidence" value="ECO:0007669"/>
    <property type="project" value="UniProtKB-KW"/>
</dbReference>
<dbReference type="CDD" id="cd00371">
    <property type="entry name" value="HMA"/>
    <property type="match status" value="1"/>
</dbReference>
<dbReference type="CDD" id="cd07545">
    <property type="entry name" value="P-type_ATPase_Cd-like"/>
    <property type="match status" value="1"/>
</dbReference>
<dbReference type="FunFam" id="2.70.150.10:FF:000002">
    <property type="entry name" value="Copper-transporting ATPase 1, putative"/>
    <property type="match status" value="1"/>
</dbReference>
<dbReference type="Gene3D" id="3.30.70.100">
    <property type="match status" value="1"/>
</dbReference>
<dbReference type="Gene3D" id="3.40.1110.10">
    <property type="entry name" value="Calcium-transporting ATPase, cytoplasmic domain N"/>
    <property type="match status" value="1"/>
</dbReference>
<dbReference type="Gene3D" id="2.70.150.10">
    <property type="entry name" value="Calcium-transporting ATPase, cytoplasmic transduction domain A"/>
    <property type="match status" value="1"/>
</dbReference>
<dbReference type="Gene3D" id="3.40.50.1000">
    <property type="entry name" value="HAD superfamily/HAD-like"/>
    <property type="match status" value="1"/>
</dbReference>
<dbReference type="InterPro" id="IPR023299">
    <property type="entry name" value="ATPase_P-typ_cyto_dom_N"/>
</dbReference>
<dbReference type="InterPro" id="IPR018303">
    <property type="entry name" value="ATPase_P-typ_P_site"/>
</dbReference>
<dbReference type="InterPro" id="IPR023298">
    <property type="entry name" value="ATPase_P-typ_TM_dom_sf"/>
</dbReference>
<dbReference type="InterPro" id="IPR008250">
    <property type="entry name" value="ATPase_P-typ_transduc_dom_A_sf"/>
</dbReference>
<dbReference type="InterPro" id="IPR051014">
    <property type="entry name" value="Cation_Transport_ATPase_IB"/>
</dbReference>
<dbReference type="InterPro" id="IPR036412">
    <property type="entry name" value="HAD-like_sf"/>
</dbReference>
<dbReference type="InterPro" id="IPR023214">
    <property type="entry name" value="HAD_sf"/>
</dbReference>
<dbReference type="InterPro" id="IPR017969">
    <property type="entry name" value="Heavy-metal-associated_CS"/>
</dbReference>
<dbReference type="InterPro" id="IPR006121">
    <property type="entry name" value="HMA_dom"/>
</dbReference>
<dbReference type="InterPro" id="IPR036163">
    <property type="entry name" value="HMA_dom_sf"/>
</dbReference>
<dbReference type="InterPro" id="IPR027256">
    <property type="entry name" value="P-typ_ATPase_IB"/>
</dbReference>
<dbReference type="InterPro" id="IPR001757">
    <property type="entry name" value="P_typ_ATPase"/>
</dbReference>
<dbReference type="InterPro" id="IPR044492">
    <property type="entry name" value="P_typ_ATPase_HD_dom"/>
</dbReference>
<dbReference type="NCBIfam" id="TIGR01511">
    <property type="entry name" value="ATPase-IB1_Cu"/>
    <property type="match status" value="1"/>
</dbReference>
<dbReference type="NCBIfam" id="TIGR01512">
    <property type="entry name" value="ATPase-IB2_Cd"/>
    <property type="match status" value="1"/>
</dbReference>
<dbReference type="NCBIfam" id="TIGR01525">
    <property type="entry name" value="ATPase-IB_hvy"/>
    <property type="match status" value="1"/>
</dbReference>
<dbReference type="NCBIfam" id="TIGR01494">
    <property type="entry name" value="ATPase_P-type"/>
    <property type="match status" value="1"/>
</dbReference>
<dbReference type="PANTHER" id="PTHR48085">
    <property type="entry name" value="CADMIUM/ZINC-TRANSPORTING ATPASE HMA2-RELATED"/>
    <property type="match status" value="1"/>
</dbReference>
<dbReference type="PANTHER" id="PTHR48085:SF5">
    <property type="entry name" value="CADMIUM_ZINC-TRANSPORTING ATPASE HMA4-RELATED"/>
    <property type="match status" value="1"/>
</dbReference>
<dbReference type="Pfam" id="PF00122">
    <property type="entry name" value="E1-E2_ATPase"/>
    <property type="match status" value="1"/>
</dbReference>
<dbReference type="Pfam" id="PF00403">
    <property type="entry name" value="HMA"/>
    <property type="match status" value="1"/>
</dbReference>
<dbReference type="Pfam" id="PF00702">
    <property type="entry name" value="Hydrolase"/>
    <property type="match status" value="1"/>
</dbReference>
<dbReference type="PRINTS" id="PR00119">
    <property type="entry name" value="CATATPASE"/>
</dbReference>
<dbReference type="PRINTS" id="PR00941">
    <property type="entry name" value="CDATPASE"/>
</dbReference>
<dbReference type="SFLD" id="SFLDS00003">
    <property type="entry name" value="Haloacid_Dehalogenase"/>
    <property type="match status" value="1"/>
</dbReference>
<dbReference type="SFLD" id="SFLDF00027">
    <property type="entry name" value="p-type_atpase"/>
    <property type="match status" value="1"/>
</dbReference>
<dbReference type="SUPFAM" id="SSF81653">
    <property type="entry name" value="Calcium ATPase, transduction domain A"/>
    <property type="match status" value="1"/>
</dbReference>
<dbReference type="SUPFAM" id="SSF81665">
    <property type="entry name" value="Calcium ATPase, transmembrane domain M"/>
    <property type="match status" value="1"/>
</dbReference>
<dbReference type="SUPFAM" id="SSF56784">
    <property type="entry name" value="HAD-like"/>
    <property type="match status" value="1"/>
</dbReference>
<dbReference type="SUPFAM" id="SSF55008">
    <property type="entry name" value="HMA, heavy metal-associated domain"/>
    <property type="match status" value="1"/>
</dbReference>
<dbReference type="PROSITE" id="PS00154">
    <property type="entry name" value="ATPASE_E1_E2"/>
    <property type="match status" value="1"/>
</dbReference>
<dbReference type="PROSITE" id="PS01047">
    <property type="entry name" value="HMA_1"/>
    <property type="match status" value="1"/>
</dbReference>
<dbReference type="PROSITE" id="PS50846">
    <property type="entry name" value="HMA_2"/>
    <property type="match status" value="1"/>
</dbReference>
<comment type="function">
    <text evidence="1">Couples the hydrolysis of ATP with the export of cadmium.</text>
</comment>
<comment type="catalytic activity">
    <reaction evidence="1">
        <text>Cd(2+)(in) + ATP + H2O = Cd(2+)(out) + ADP + phosphate + H(+)</text>
        <dbReference type="Rhea" id="RHEA:12132"/>
        <dbReference type="ChEBI" id="CHEBI:15377"/>
        <dbReference type="ChEBI" id="CHEBI:15378"/>
        <dbReference type="ChEBI" id="CHEBI:30616"/>
        <dbReference type="ChEBI" id="CHEBI:43474"/>
        <dbReference type="ChEBI" id="CHEBI:48775"/>
        <dbReference type="ChEBI" id="CHEBI:456216"/>
        <dbReference type="EC" id="7.2.2.21"/>
    </reaction>
</comment>
<comment type="subcellular location">
    <subcellularLocation>
        <location evidence="1">Cell membrane</location>
        <topology evidence="2">Multi-pass membrane protein</topology>
    </subcellularLocation>
</comment>
<comment type="induction">
    <text evidence="4">By cadmium.</text>
</comment>
<comment type="similarity">
    <text evidence="5">Belongs to the cation transport ATPase (P-type) (TC 3.A.3) family. Type IB subfamily.</text>
</comment>
<geneLocation type="plasmid">
    <name>pLm74</name>
</geneLocation>
<reference key="1">
    <citation type="journal article" date="1994" name="J. Bacteriol.">
        <title>Plasmid-borne cadmium resistance genes in Listeria monocytogenes are similar to cadA and cadC of Staphylococcus aureus and are induced by cadmium.</title>
        <authorList>
            <person name="Lebrun M."/>
            <person name="Audurier A."/>
            <person name="Cossart P."/>
        </authorList>
    </citation>
    <scope>NUCLEOTIDE SEQUENCE [GENOMIC DNA]</scope>
    <scope>INDUCTION</scope>
    <source>
        <strain>LM74</strain>
    </source>
</reference>
<reference key="2">
    <citation type="journal article" date="1994" name="J. Bacteriol.">
        <title>Plasmid-borne cadmium resistance genes in Listeria monocytogenes are present on Tn5422, a novel transposon closely related to Tn917.</title>
        <authorList>
            <person name="Lebrun M."/>
            <person name="Audurier A."/>
            <person name="Cossart P."/>
        </authorList>
    </citation>
    <scope>NUCLEOTIDE SEQUENCE [GENOMIC DNA]</scope>
    <source>
        <strain>LM74</strain>
        <transposon>Tn5422</transposon>
    </source>
</reference>
<organism>
    <name type="scientific">Listeria monocytogenes</name>
    <dbReference type="NCBI Taxonomy" id="1639"/>
    <lineage>
        <taxon>Bacteria</taxon>
        <taxon>Bacillati</taxon>
        <taxon>Bacillota</taxon>
        <taxon>Bacilli</taxon>
        <taxon>Bacillales</taxon>
        <taxon>Listeriaceae</taxon>
        <taxon>Listeria</taxon>
    </lineage>
</organism>
<accession>Q60048</accession>
<evidence type="ECO:0000250" key="1">
    <source>
        <dbReference type="UniProtKB" id="P20021"/>
    </source>
</evidence>
<evidence type="ECO:0000255" key="2"/>
<evidence type="ECO:0000255" key="3">
    <source>
        <dbReference type="PROSITE-ProRule" id="PRU00280"/>
    </source>
</evidence>
<evidence type="ECO:0000269" key="4">
    <source>
    </source>
</evidence>
<evidence type="ECO:0000305" key="5"/>
<evidence type="ECO:0007829" key="6">
    <source>
        <dbReference type="PDB" id="2AJ0"/>
    </source>
</evidence>
<proteinExistence type="evidence at protein level"/>
<sequence length="711" mass="77089">MAEKTVYRVDGLSCTNCAAKFERNVKEIEGVTEAIVNFGASKITVTGEASIQQVEQAGAFEHLKIIPEKESFTDPEHFTDHQSFIRKNWRLLLSGLFIAVGYASQIMNGEDFYLTNALFIFAIFIGGYSLFKEGFKNLLKFEFTMETLMTIAIIGAAFIGEWAEGSIVVILFAVSEALERYSMDKARQSIRSLMDIAPKEALVRRSGTDRMVHVDDIQIGDIMIIKPGQKIAMDGHVVKGYSAVNQAAITGESIPVEKNIDDSVFAGTLNEEGLLEVAVTKRVEDTTISKIIHLVEEAQGERAPAQAFVDTFAKYYTPAIIVIAALIATVPPLLFGGNWETWVYQGLSVLVVGCPCALVVSTPVAIVTAIGNAAKNGVLVKGGVYLEEIGGLKAIAFDKTGTLTKGVPVVTDYIELTEATNIQHNKNYIIMAALEQLSQHPLASAIIKYGETREMDLTSINVNDFTSITGKGIRGTVDGNTYYVGSPVLFKELLASQFTDSIHRQVSDLQLKGKTAMLFGTNQKLISIVAVADEVRSSSQHVIKRLHELGIEKTIMLTGDNQATAQAIGQQVGVSEIEGELMPQDKLDYIKQLKINFGKVAMVGDGINDAPALAAATVGIAMGGAGTDTAIETADVALMGDDLQKLPFTVKLSRKTLQIIKQNITFSLVIKLIALLLVIPGWLTLWIAIMADMGATLLVTLNGLRLMKVKD</sequence>
<gene>
    <name type="primary">cadA</name>
</gene>
<keyword id="KW-0002">3D-structure</keyword>
<keyword id="KW-0067">ATP-binding</keyword>
<keyword id="KW-0104">Cadmium</keyword>
<keyword id="KW-0105">Cadmium resistance</keyword>
<keyword id="KW-1003">Cell membrane</keyword>
<keyword id="KW-0406">Ion transport</keyword>
<keyword id="KW-0460">Magnesium</keyword>
<keyword id="KW-0472">Membrane</keyword>
<keyword id="KW-0479">Metal-binding</keyword>
<keyword id="KW-0547">Nucleotide-binding</keyword>
<keyword id="KW-0597">Phosphoprotein</keyword>
<keyword id="KW-0614">Plasmid</keyword>
<keyword id="KW-1278">Translocase</keyword>
<keyword id="KW-0812">Transmembrane</keyword>
<keyword id="KW-1133">Transmembrane helix</keyword>
<keyword id="KW-0813">Transport</keyword>
<keyword id="KW-0814">Transposable element</keyword>
<name>CADA_LISMN</name>